<gene>
    <name evidence="1" type="primary">rpmD</name>
    <name type="ordered locus">Dred_0233</name>
</gene>
<organism>
    <name type="scientific">Desulforamulus reducens (strain ATCC BAA-1160 / DSM 100696 / MI-1)</name>
    <name type="common">Desulfotomaculum reducens</name>
    <dbReference type="NCBI Taxonomy" id="349161"/>
    <lineage>
        <taxon>Bacteria</taxon>
        <taxon>Bacillati</taxon>
        <taxon>Bacillota</taxon>
        <taxon>Clostridia</taxon>
        <taxon>Eubacteriales</taxon>
        <taxon>Peptococcaceae</taxon>
        <taxon>Desulforamulus</taxon>
    </lineage>
</organism>
<dbReference type="EMBL" id="CP000612">
    <property type="protein sequence ID" value="ABO48782.1"/>
    <property type="molecule type" value="Genomic_DNA"/>
</dbReference>
<dbReference type="RefSeq" id="WP_011876622.1">
    <property type="nucleotide sequence ID" value="NC_009253.1"/>
</dbReference>
<dbReference type="SMR" id="A4J129"/>
<dbReference type="STRING" id="349161.Dred_0233"/>
<dbReference type="KEGG" id="drm:Dred_0233"/>
<dbReference type="eggNOG" id="COG1841">
    <property type="taxonomic scope" value="Bacteria"/>
</dbReference>
<dbReference type="HOGENOM" id="CLU_131047_2_1_9"/>
<dbReference type="OrthoDB" id="9812790at2"/>
<dbReference type="Proteomes" id="UP000001556">
    <property type="component" value="Chromosome"/>
</dbReference>
<dbReference type="GO" id="GO:0022625">
    <property type="term" value="C:cytosolic large ribosomal subunit"/>
    <property type="evidence" value="ECO:0007669"/>
    <property type="project" value="TreeGrafter"/>
</dbReference>
<dbReference type="GO" id="GO:0003735">
    <property type="term" value="F:structural constituent of ribosome"/>
    <property type="evidence" value="ECO:0007669"/>
    <property type="project" value="InterPro"/>
</dbReference>
<dbReference type="GO" id="GO:0006412">
    <property type="term" value="P:translation"/>
    <property type="evidence" value="ECO:0007669"/>
    <property type="project" value="UniProtKB-UniRule"/>
</dbReference>
<dbReference type="CDD" id="cd01658">
    <property type="entry name" value="Ribosomal_L30"/>
    <property type="match status" value="1"/>
</dbReference>
<dbReference type="FunFam" id="3.30.1390.20:FF:000001">
    <property type="entry name" value="50S ribosomal protein L30"/>
    <property type="match status" value="1"/>
</dbReference>
<dbReference type="Gene3D" id="3.30.1390.20">
    <property type="entry name" value="Ribosomal protein L30, ferredoxin-like fold domain"/>
    <property type="match status" value="1"/>
</dbReference>
<dbReference type="HAMAP" id="MF_01371_B">
    <property type="entry name" value="Ribosomal_uL30_B"/>
    <property type="match status" value="1"/>
</dbReference>
<dbReference type="InterPro" id="IPR036919">
    <property type="entry name" value="Ribo_uL30_ferredoxin-like_sf"/>
</dbReference>
<dbReference type="InterPro" id="IPR005996">
    <property type="entry name" value="Ribosomal_uL30_bac-type"/>
</dbReference>
<dbReference type="InterPro" id="IPR018038">
    <property type="entry name" value="Ribosomal_uL30_CS"/>
</dbReference>
<dbReference type="InterPro" id="IPR016082">
    <property type="entry name" value="Ribosomal_uL30_ferredoxin-like"/>
</dbReference>
<dbReference type="NCBIfam" id="TIGR01308">
    <property type="entry name" value="rpmD_bact"/>
    <property type="match status" value="1"/>
</dbReference>
<dbReference type="PANTHER" id="PTHR15892:SF2">
    <property type="entry name" value="LARGE RIBOSOMAL SUBUNIT PROTEIN UL30M"/>
    <property type="match status" value="1"/>
</dbReference>
<dbReference type="PANTHER" id="PTHR15892">
    <property type="entry name" value="MITOCHONDRIAL RIBOSOMAL PROTEIN L30"/>
    <property type="match status" value="1"/>
</dbReference>
<dbReference type="Pfam" id="PF00327">
    <property type="entry name" value="Ribosomal_L30"/>
    <property type="match status" value="1"/>
</dbReference>
<dbReference type="PIRSF" id="PIRSF002211">
    <property type="entry name" value="Ribosomal_L30_bac-type"/>
    <property type="match status" value="1"/>
</dbReference>
<dbReference type="SUPFAM" id="SSF55129">
    <property type="entry name" value="Ribosomal protein L30p/L7e"/>
    <property type="match status" value="1"/>
</dbReference>
<dbReference type="PROSITE" id="PS00634">
    <property type="entry name" value="RIBOSOMAL_L30"/>
    <property type="match status" value="1"/>
</dbReference>
<protein>
    <recommendedName>
        <fullName evidence="1">Large ribosomal subunit protein uL30</fullName>
    </recommendedName>
    <alternativeName>
        <fullName evidence="2">50S ribosomal protein L30</fullName>
    </alternativeName>
</protein>
<comment type="subunit">
    <text evidence="1">Part of the 50S ribosomal subunit.</text>
</comment>
<comment type="similarity">
    <text evidence="1">Belongs to the universal ribosomal protein uL30 family.</text>
</comment>
<name>RL30_DESRM</name>
<proteinExistence type="inferred from homology"/>
<sequence>MAKLKITLVRSLIGRPEAQRKVVRALGLGKTNSMVEQNDSPIIRGMINKVAHLVKVEEA</sequence>
<evidence type="ECO:0000255" key="1">
    <source>
        <dbReference type="HAMAP-Rule" id="MF_01371"/>
    </source>
</evidence>
<evidence type="ECO:0000305" key="2"/>
<keyword id="KW-1185">Reference proteome</keyword>
<keyword id="KW-0687">Ribonucleoprotein</keyword>
<keyword id="KW-0689">Ribosomal protein</keyword>
<reference key="1">
    <citation type="submission" date="2007-03" db="EMBL/GenBank/DDBJ databases">
        <title>Complete sequence of Desulfotomaculum reducens MI-1.</title>
        <authorList>
            <consortium name="US DOE Joint Genome Institute"/>
            <person name="Copeland A."/>
            <person name="Lucas S."/>
            <person name="Lapidus A."/>
            <person name="Barry K."/>
            <person name="Detter J.C."/>
            <person name="Glavina del Rio T."/>
            <person name="Hammon N."/>
            <person name="Israni S."/>
            <person name="Dalin E."/>
            <person name="Tice H."/>
            <person name="Pitluck S."/>
            <person name="Sims D."/>
            <person name="Brettin T."/>
            <person name="Bruce D."/>
            <person name="Han C."/>
            <person name="Tapia R."/>
            <person name="Schmutz J."/>
            <person name="Larimer F."/>
            <person name="Land M."/>
            <person name="Hauser L."/>
            <person name="Kyrpides N."/>
            <person name="Kim E."/>
            <person name="Tebo B.M."/>
            <person name="Richardson P."/>
        </authorList>
    </citation>
    <scope>NUCLEOTIDE SEQUENCE [LARGE SCALE GENOMIC DNA]</scope>
    <source>
        <strain>ATCC BAA-1160 / DSM 100696 / MI-1</strain>
    </source>
</reference>
<accession>A4J129</accession>
<feature type="chain" id="PRO_1000073449" description="Large ribosomal subunit protein uL30">
    <location>
        <begin position="1"/>
        <end position="59"/>
    </location>
</feature>